<gene>
    <name evidence="1" type="primary">folD</name>
    <name type="ordered locus">PSEEN1862</name>
</gene>
<comment type="function">
    <text evidence="1">Catalyzes the oxidation of 5,10-methylenetetrahydrofolate to 5,10-methenyltetrahydrofolate and then the hydrolysis of 5,10-methenyltetrahydrofolate to 10-formyltetrahydrofolate.</text>
</comment>
<comment type="catalytic activity">
    <reaction evidence="1">
        <text>(6R)-5,10-methylene-5,6,7,8-tetrahydrofolate + NADP(+) = (6R)-5,10-methenyltetrahydrofolate + NADPH</text>
        <dbReference type="Rhea" id="RHEA:22812"/>
        <dbReference type="ChEBI" id="CHEBI:15636"/>
        <dbReference type="ChEBI" id="CHEBI:57455"/>
        <dbReference type="ChEBI" id="CHEBI:57783"/>
        <dbReference type="ChEBI" id="CHEBI:58349"/>
        <dbReference type="EC" id="1.5.1.5"/>
    </reaction>
</comment>
<comment type="catalytic activity">
    <reaction evidence="1">
        <text>(6R)-5,10-methenyltetrahydrofolate + H2O = (6R)-10-formyltetrahydrofolate + H(+)</text>
        <dbReference type="Rhea" id="RHEA:23700"/>
        <dbReference type="ChEBI" id="CHEBI:15377"/>
        <dbReference type="ChEBI" id="CHEBI:15378"/>
        <dbReference type="ChEBI" id="CHEBI:57455"/>
        <dbReference type="ChEBI" id="CHEBI:195366"/>
        <dbReference type="EC" id="3.5.4.9"/>
    </reaction>
</comment>
<comment type="pathway">
    <text evidence="1">One-carbon metabolism; tetrahydrofolate interconversion.</text>
</comment>
<comment type="subunit">
    <text evidence="1">Homodimer.</text>
</comment>
<comment type="similarity">
    <text evidence="1">Belongs to the tetrahydrofolate dehydrogenase/cyclohydrolase family.</text>
</comment>
<organism>
    <name type="scientific">Pseudomonas entomophila (strain L48)</name>
    <dbReference type="NCBI Taxonomy" id="384676"/>
    <lineage>
        <taxon>Bacteria</taxon>
        <taxon>Pseudomonadati</taxon>
        <taxon>Pseudomonadota</taxon>
        <taxon>Gammaproteobacteria</taxon>
        <taxon>Pseudomonadales</taxon>
        <taxon>Pseudomonadaceae</taxon>
        <taxon>Pseudomonas</taxon>
    </lineage>
</organism>
<accession>Q1ICB3</accession>
<evidence type="ECO:0000255" key="1">
    <source>
        <dbReference type="HAMAP-Rule" id="MF_01576"/>
    </source>
</evidence>
<proteinExistence type="inferred from homology"/>
<name>FOLD_PSEE4</name>
<feature type="chain" id="PRO_0000305867" description="Bifunctional protein FolD">
    <location>
        <begin position="1"/>
        <end position="284"/>
    </location>
</feature>
<feature type="binding site" evidence="1">
    <location>
        <begin position="166"/>
        <end position="168"/>
    </location>
    <ligand>
        <name>NADP(+)</name>
        <dbReference type="ChEBI" id="CHEBI:58349"/>
    </ligand>
</feature>
<feature type="binding site" evidence="1">
    <location>
        <position position="232"/>
    </location>
    <ligand>
        <name>NADP(+)</name>
        <dbReference type="ChEBI" id="CHEBI:58349"/>
    </ligand>
</feature>
<sequence length="284" mass="30594">MTAHLIDGKAIAANLRQQIAQRVAERRQQGLRTPGLAVILVGTDPASQVYVSHKRKDCEEVGFISQAFDLPSDTTQQALTDLIDRLNDDPAVDGILLQLPLPAHLDASLLLERIRPDKDVDGFHPYNIGRLAQRIPLLRPCTPKGIMTLLESTGQDLYGMNAVIVGASNIVGRPMAMELLLAGCTVTVCHRFTKDLAGHVGRADLVVVAAGKPGLVKGEWVKEGAIVIDVGINRQEDGKLVGDVVYETALPRAGWITPVPGGVGPMTRACLLENTLYAAEELHK</sequence>
<keyword id="KW-0028">Amino-acid biosynthesis</keyword>
<keyword id="KW-0368">Histidine biosynthesis</keyword>
<keyword id="KW-0378">Hydrolase</keyword>
<keyword id="KW-0486">Methionine biosynthesis</keyword>
<keyword id="KW-0511">Multifunctional enzyme</keyword>
<keyword id="KW-0521">NADP</keyword>
<keyword id="KW-0554">One-carbon metabolism</keyword>
<keyword id="KW-0560">Oxidoreductase</keyword>
<keyword id="KW-0658">Purine biosynthesis</keyword>
<protein>
    <recommendedName>
        <fullName evidence="1">Bifunctional protein FolD</fullName>
    </recommendedName>
    <domain>
        <recommendedName>
            <fullName evidence="1">Methylenetetrahydrofolate dehydrogenase</fullName>
            <ecNumber evidence="1">1.5.1.5</ecNumber>
        </recommendedName>
    </domain>
    <domain>
        <recommendedName>
            <fullName evidence="1">Methenyltetrahydrofolate cyclohydrolase</fullName>
            <ecNumber evidence="1">3.5.4.9</ecNumber>
        </recommendedName>
    </domain>
</protein>
<reference key="1">
    <citation type="journal article" date="2006" name="Nat. Biotechnol.">
        <title>Complete genome sequence of the entomopathogenic and metabolically versatile soil bacterium Pseudomonas entomophila.</title>
        <authorList>
            <person name="Vodovar N."/>
            <person name="Vallenet D."/>
            <person name="Cruveiller S."/>
            <person name="Rouy Z."/>
            <person name="Barbe V."/>
            <person name="Acosta C."/>
            <person name="Cattolico L."/>
            <person name="Jubin C."/>
            <person name="Lajus A."/>
            <person name="Segurens B."/>
            <person name="Vacherie B."/>
            <person name="Wincker P."/>
            <person name="Weissenbach J."/>
            <person name="Lemaitre B."/>
            <person name="Medigue C."/>
            <person name="Boccard F."/>
        </authorList>
    </citation>
    <scope>NUCLEOTIDE SEQUENCE [LARGE SCALE GENOMIC DNA]</scope>
    <source>
        <strain>L48</strain>
    </source>
</reference>
<dbReference type="EC" id="1.5.1.5" evidence="1"/>
<dbReference type="EC" id="3.5.4.9" evidence="1"/>
<dbReference type="EMBL" id="CT573326">
    <property type="protein sequence ID" value="CAK14700.1"/>
    <property type="molecule type" value="Genomic_DNA"/>
</dbReference>
<dbReference type="RefSeq" id="WP_011533109.1">
    <property type="nucleotide sequence ID" value="NC_008027.1"/>
</dbReference>
<dbReference type="SMR" id="Q1ICB3"/>
<dbReference type="STRING" id="384676.PSEEN1862"/>
<dbReference type="GeneID" id="32805087"/>
<dbReference type="KEGG" id="pen:PSEEN1862"/>
<dbReference type="eggNOG" id="COG0190">
    <property type="taxonomic scope" value="Bacteria"/>
</dbReference>
<dbReference type="HOGENOM" id="CLU_034045_2_1_6"/>
<dbReference type="OrthoDB" id="9803580at2"/>
<dbReference type="UniPathway" id="UPA00193"/>
<dbReference type="Proteomes" id="UP000000658">
    <property type="component" value="Chromosome"/>
</dbReference>
<dbReference type="GO" id="GO:0005829">
    <property type="term" value="C:cytosol"/>
    <property type="evidence" value="ECO:0007669"/>
    <property type="project" value="TreeGrafter"/>
</dbReference>
<dbReference type="GO" id="GO:0004477">
    <property type="term" value="F:methenyltetrahydrofolate cyclohydrolase activity"/>
    <property type="evidence" value="ECO:0007669"/>
    <property type="project" value="UniProtKB-UniRule"/>
</dbReference>
<dbReference type="GO" id="GO:0004488">
    <property type="term" value="F:methylenetetrahydrofolate dehydrogenase (NADP+) activity"/>
    <property type="evidence" value="ECO:0007669"/>
    <property type="project" value="UniProtKB-UniRule"/>
</dbReference>
<dbReference type="GO" id="GO:0000105">
    <property type="term" value="P:L-histidine biosynthetic process"/>
    <property type="evidence" value="ECO:0007669"/>
    <property type="project" value="UniProtKB-KW"/>
</dbReference>
<dbReference type="GO" id="GO:0009086">
    <property type="term" value="P:methionine biosynthetic process"/>
    <property type="evidence" value="ECO:0007669"/>
    <property type="project" value="UniProtKB-KW"/>
</dbReference>
<dbReference type="GO" id="GO:0006164">
    <property type="term" value="P:purine nucleotide biosynthetic process"/>
    <property type="evidence" value="ECO:0007669"/>
    <property type="project" value="UniProtKB-KW"/>
</dbReference>
<dbReference type="GO" id="GO:0035999">
    <property type="term" value="P:tetrahydrofolate interconversion"/>
    <property type="evidence" value="ECO:0007669"/>
    <property type="project" value="UniProtKB-UniRule"/>
</dbReference>
<dbReference type="CDD" id="cd01080">
    <property type="entry name" value="NAD_bind_m-THF_DH_Cyclohyd"/>
    <property type="match status" value="1"/>
</dbReference>
<dbReference type="FunFam" id="3.40.50.10860:FF:000001">
    <property type="entry name" value="Bifunctional protein FolD"/>
    <property type="match status" value="1"/>
</dbReference>
<dbReference type="FunFam" id="3.40.50.720:FF:000006">
    <property type="entry name" value="Bifunctional protein FolD"/>
    <property type="match status" value="1"/>
</dbReference>
<dbReference type="Gene3D" id="3.40.50.10860">
    <property type="entry name" value="Leucine Dehydrogenase, chain A, domain 1"/>
    <property type="match status" value="1"/>
</dbReference>
<dbReference type="Gene3D" id="3.40.50.720">
    <property type="entry name" value="NAD(P)-binding Rossmann-like Domain"/>
    <property type="match status" value="1"/>
</dbReference>
<dbReference type="HAMAP" id="MF_01576">
    <property type="entry name" value="THF_DHG_CYH"/>
    <property type="match status" value="1"/>
</dbReference>
<dbReference type="InterPro" id="IPR046346">
    <property type="entry name" value="Aminoacid_DH-like_N_sf"/>
</dbReference>
<dbReference type="InterPro" id="IPR036291">
    <property type="entry name" value="NAD(P)-bd_dom_sf"/>
</dbReference>
<dbReference type="InterPro" id="IPR000672">
    <property type="entry name" value="THF_DH/CycHdrlase"/>
</dbReference>
<dbReference type="InterPro" id="IPR020630">
    <property type="entry name" value="THF_DH/CycHdrlase_cat_dom"/>
</dbReference>
<dbReference type="InterPro" id="IPR020631">
    <property type="entry name" value="THF_DH/CycHdrlase_NAD-bd_dom"/>
</dbReference>
<dbReference type="NCBIfam" id="NF008058">
    <property type="entry name" value="PRK10792.1"/>
    <property type="match status" value="1"/>
</dbReference>
<dbReference type="NCBIfam" id="NF010783">
    <property type="entry name" value="PRK14186.1"/>
    <property type="match status" value="1"/>
</dbReference>
<dbReference type="PANTHER" id="PTHR48099:SF5">
    <property type="entry name" value="C-1-TETRAHYDROFOLATE SYNTHASE, CYTOPLASMIC"/>
    <property type="match status" value="1"/>
</dbReference>
<dbReference type="PANTHER" id="PTHR48099">
    <property type="entry name" value="C-1-TETRAHYDROFOLATE SYNTHASE, CYTOPLASMIC-RELATED"/>
    <property type="match status" value="1"/>
</dbReference>
<dbReference type="Pfam" id="PF00763">
    <property type="entry name" value="THF_DHG_CYH"/>
    <property type="match status" value="1"/>
</dbReference>
<dbReference type="Pfam" id="PF02882">
    <property type="entry name" value="THF_DHG_CYH_C"/>
    <property type="match status" value="1"/>
</dbReference>
<dbReference type="PRINTS" id="PR00085">
    <property type="entry name" value="THFDHDRGNASE"/>
</dbReference>
<dbReference type="SUPFAM" id="SSF53223">
    <property type="entry name" value="Aminoacid dehydrogenase-like, N-terminal domain"/>
    <property type="match status" value="1"/>
</dbReference>
<dbReference type="SUPFAM" id="SSF51735">
    <property type="entry name" value="NAD(P)-binding Rossmann-fold domains"/>
    <property type="match status" value="1"/>
</dbReference>